<reference key="1">
    <citation type="journal article" date="2015" name="Genome Announc.">
        <title>Complete genome sequence of Anaeromyxobacter sp. Fw109-5, an anaerobic, metal-reducing bacterium isolated from a contaminated subsurface environment.</title>
        <authorList>
            <person name="Hwang C."/>
            <person name="Copeland A."/>
            <person name="Lucas S."/>
            <person name="Lapidus A."/>
            <person name="Barry K."/>
            <person name="Glavina Del Rio T."/>
            <person name="Dalin E."/>
            <person name="Tice H."/>
            <person name="Pitluck S."/>
            <person name="Sims D."/>
            <person name="Brettin T."/>
            <person name="Bruce D.C."/>
            <person name="Detter J.C."/>
            <person name="Han C.S."/>
            <person name="Schmutz J."/>
            <person name="Larimer F.W."/>
            <person name="Land M.L."/>
            <person name="Hauser L.J."/>
            <person name="Kyrpides N."/>
            <person name="Lykidis A."/>
            <person name="Richardson P."/>
            <person name="Belieav A."/>
            <person name="Sanford R.A."/>
            <person name="Loeffler F.E."/>
            <person name="Fields M.W."/>
        </authorList>
    </citation>
    <scope>NUCLEOTIDE SEQUENCE [LARGE SCALE GENOMIC DNA]</scope>
    <source>
        <strain>Fw109-5</strain>
    </source>
</reference>
<feature type="chain" id="PRO_0000331022" description="SsrA-binding protein">
    <location>
        <begin position="1"/>
        <end position="165"/>
    </location>
</feature>
<feature type="region of interest" description="Disordered" evidence="2">
    <location>
        <begin position="141"/>
        <end position="165"/>
    </location>
</feature>
<accession>A7HGZ0</accession>
<evidence type="ECO:0000255" key="1">
    <source>
        <dbReference type="HAMAP-Rule" id="MF_00023"/>
    </source>
</evidence>
<evidence type="ECO:0000256" key="2">
    <source>
        <dbReference type="SAM" id="MobiDB-lite"/>
    </source>
</evidence>
<keyword id="KW-0963">Cytoplasm</keyword>
<keyword id="KW-1185">Reference proteome</keyword>
<keyword id="KW-0694">RNA-binding</keyword>
<name>SSRP_ANADF</name>
<gene>
    <name evidence="1" type="primary">smpB</name>
    <name type="ordered locus">Anae109_3807</name>
</gene>
<protein>
    <recommendedName>
        <fullName evidence="1">SsrA-binding protein</fullName>
    </recommendedName>
    <alternativeName>
        <fullName evidence="1">Small protein B</fullName>
    </alternativeName>
</protein>
<proteinExistence type="inferred from homology"/>
<dbReference type="EMBL" id="CP000769">
    <property type="protein sequence ID" value="ABS27986.1"/>
    <property type="molecule type" value="Genomic_DNA"/>
</dbReference>
<dbReference type="RefSeq" id="WP_012098617.1">
    <property type="nucleotide sequence ID" value="NC_009675.1"/>
</dbReference>
<dbReference type="SMR" id="A7HGZ0"/>
<dbReference type="STRING" id="404589.Anae109_3807"/>
<dbReference type="KEGG" id="afw:Anae109_3807"/>
<dbReference type="eggNOG" id="COG0691">
    <property type="taxonomic scope" value="Bacteria"/>
</dbReference>
<dbReference type="HOGENOM" id="CLU_108953_0_1_7"/>
<dbReference type="OrthoDB" id="9805462at2"/>
<dbReference type="Proteomes" id="UP000006382">
    <property type="component" value="Chromosome"/>
</dbReference>
<dbReference type="GO" id="GO:0005829">
    <property type="term" value="C:cytosol"/>
    <property type="evidence" value="ECO:0007669"/>
    <property type="project" value="TreeGrafter"/>
</dbReference>
<dbReference type="GO" id="GO:0003723">
    <property type="term" value="F:RNA binding"/>
    <property type="evidence" value="ECO:0007669"/>
    <property type="project" value="UniProtKB-UniRule"/>
</dbReference>
<dbReference type="GO" id="GO:0070929">
    <property type="term" value="P:trans-translation"/>
    <property type="evidence" value="ECO:0007669"/>
    <property type="project" value="UniProtKB-UniRule"/>
</dbReference>
<dbReference type="CDD" id="cd09294">
    <property type="entry name" value="SmpB"/>
    <property type="match status" value="1"/>
</dbReference>
<dbReference type="Gene3D" id="2.40.280.10">
    <property type="match status" value="1"/>
</dbReference>
<dbReference type="HAMAP" id="MF_00023">
    <property type="entry name" value="SmpB"/>
    <property type="match status" value="1"/>
</dbReference>
<dbReference type="InterPro" id="IPR023620">
    <property type="entry name" value="SmpB"/>
</dbReference>
<dbReference type="InterPro" id="IPR000037">
    <property type="entry name" value="SsrA-bd_prot"/>
</dbReference>
<dbReference type="InterPro" id="IPR020081">
    <property type="entry name" value="SsrA-bd_prot_CS"/>
</dbReference>
<dbReference type="NCBIfam" id="NF003843">
    <property type="entry name" value="PRK05422.1"/>
    <property type="match status" value="1"/>
</dbReference>
<dbReference type="NCBIfam" id="TIGR00086">
    <property type="entry name" value="smpB"/>
    <property type="match status" value="1"/>
</dbReference>
<dbReference type="PANTHER" id="PTHR30308:SF2">
    <property type="entry name" value="SSRA-BINDING PROTEIN"/>
    <property type="match status" value="1"/>
</dbReference>
<dbReference type="PANTHER" id="PTHR30308">
    <property type="entry name" value="TMRNA-BINDING COMPONENT OF TRANS-TRANSLATION TAGGING COMPLEX"/>
    <property type="match status" value="1"/>
</dbReference>
<dbReference type="Pfam" id="PF01668">
    <property type="entry name" value="SmpB"/>
    <property type="match status" value="1"/>
</dbReference>
<dbReference type="SUPFAM" id="SSF74982">
    <property type="entry name" value="Small protein B (SmpB)"/>
    <property type="match status" value="1"/>
</dbReference>
<dbReference type="PROSITE" id="PS01317">
    <property type="entry name" value="SSRP"/>
    <property type="match status" value="1"/>
</dbReference>
<sequence length="165" mass="18875">MSAKGAGGARGRGAEGEKIVATNRRARFDFTIEDSWEAGLVLTGSEVKSLREGNVNLSDAYALPRGDELFLVNCRIGEYKQAAHFGHEPLRDRKLLMNRPELDRVKGKIEQRGYTLVPLRLYFKQGWAKVELGLAKGRSHEDRRHAIAERETKREMDREISRRRR</sequence>
<organism>
    <name type="scientific">Anaeromyxobacter sp. (strain Fw109-5)</name>
    <dbReference type="NCBI Taxonomy" id="404589"/>
    <lineage>
        <taxon>Bacteria</taxon>
        <taxon>Pseudomonadati</taxon>
        <taxon>Myxococcota</taxon>
        <taxon>Myxococcia</taxon>
        <taxon>Myxococcales</taxon>
        <taxon>Cystobacterineae</taxon>
        <taxon>Anaeromyxobacteraceae</taxon>
        <taxon>Anaeromyxobacter</taxon>
    </lineage>
</organism>
<comment type="function">
    <text evidence="1">Required for rescue of stalled ribosomes mediated by trans-translation. Binds to transfer-messenger RNA (tmRNA), required for stable association of tmRNA with ribosomes. tmRNA and SmpB together mimic tRNA shape, replacing the anticodon stem-loop with SmpB. tmRNA is encoded by the ssrA gene; the 2 termini fold to resemble tRNA(Ala) and it encodes a 'tag peptide', a short internal open reading frame. During trans-translation Ala-aminoacylated tmRNA acts like a tRNA, entering the A-site of stalled ribosomes, displacing the stalled mRNA. The ribosome then switches to translate the ORF on the tmRNA; the nascent peptide is terminated with the 'tag peptide' encoded by the tmRNA and targeted for degradation. The ribosome is freed to recommence translation, which seems to be the essential function of trans-translation.</text>
</comment>
<comment type="subcellular location">
    <subcellularLocation>
        <location evidence="1">Cytoplasm</location>
    </subcellularLocation>
    <text evidence="1">The tmRNA-SmpB complex associates with stalled 70S ribosomes.</text>
</comment>
<comment type="similarity">
    <text evidence="1">Belongs to the SmpB family.</text>
</comment>